<reference key="1">
    <citation type="journal article" date="1996" name="Virus Res.">
        <title>The glycoprotein genes and gene junctions of the fish rhabdoviruses spring viremia of carp virus and hirame rhabdovirus: analysis of relationships with other rhabdoviruses.</title>
        <authorList>
            <person name="Bjorklund H.V."/>
            <person name="Higman K.H."/>
            <person name="Kurath G."/>
        </authorList>
    </citation>
    <scope>NUCLEOTIDE SEQUENCE [GENOMIC RNA]</scope>
    <source>
        <strain>Isolate 8401H</strain>
    </source>
</reference>
<reference key="2">
    <citation type="journal article" date="2004" name="Fish Shellfish Immunol.">
        <title>Development of a DNA vaccine against hirame rhabdovirus and analysis of the expression of immune-related genes after vaccination.</title>
        <authorList>
            <person name="Takano T."/>
            <person name="Iwahori A."/>
            <person name="Hirono I."/>
            <person name="Aoki T."/>
        </authorList>
    </citation>
    <scope>NUCLEOTIDE SEQUENCE [GENOMIC RNA]</scope>
    <source>
        <strain>Isolate 8601H</strain>
    </source>
</reference>
<reference key="3">
    <citation type="journal article" date="2005" name="Virus Res.">
        <title>Complete nucleotide sequence of the hirame rhabdovirus, a pathogen of marine fish.</title>
        <authorList>
            <person name="Kim D.H."/>
            <person name="Oh H.K."/>
            <person name="Eou J.I."/>
            <person name="Seo H.J."/>
            <person name="Kim S.K."/>
            <person name="Oh M.J."/>
            <person name="Nam S.W."/>
            <person name="Choi T.J."/>
        </authorList>
    </citation>
    <scope>NUCLEOTIDE SEQUENCE [GENOMIC RNA]</scope>
</reference>
<organismHost>
    <name type="scientific">Acanthopagrus schlegelii</name>
    <name type="common">Black porgy</name>
    <dbReference type="NCBI Taxonomy" id="72011"/>
</organismHost>
<organismHost>
    <name type="scientific">Paralichthys olivaceus</name>
    <name type="common">Bastard halibut</name>
    <name type="synonym">Hippoglossus olivaceus</name>
    <dbReference type="NCBI Taxonomy" id="8255"/>
</organismHost>
<organismHost>
    <name type="scientific">Plecoglossus altivelis</name>
    <name type="common">Ayu</name>
    <dbReference type="NCBI Taxonomy" id="61084"/>
</organismHost>
<organismHost>
    <name type="scientific">Sebastes inermis</name>
    <name type="common">Dark-banded rockfish</name>
    <dbReference type="NCBI Taxonomy" id="160818"/>
</organismHost>
<name>GLYCO_HIRRV</name>
<sequence length="508" mass="56602">MDPRIMYYTVLLTTAARVYGQTIKPGVDSVSDQPTWANPLFTYPVDCPAAKLSKVSPSQLRCPRIFDDENRGLVAYPAVIRSLSVGNNLGDIHTQGEYVHKVLYRTTCSTGFFGGQTIEKALVEMKLAPREVGVYDTTTASALYFPAPRCQWYTDNVHNDLTFYYTTAKSVLRDPYTLGFLDSDFIEGKCSKSPCQTHWSNVVWKGDSGVAACDTGSEIKGHIFVDKTSHHVVKATSYGHHPWGLHRACMITFCGKPWIRTDLGDLIAIEYNGGATLLAFPACKDTTVGMRGSLDDFAYLDDLVKSSESREECLEAHAEIIATNSVTPYLLSKFRSPHPGINDVYAMHDGSIYHGKCMTVAIDEVSKDRRTYRAHQTSAFVAWGHPFGDEWGGFHGLHGNDTPVIPDLEKYVAQYKVSMMDKMDIRPVPHPSVQILYNDTDTADITIRKIDSFDLQSLNWSFWPSLSALGGVPILLALVFFLYCCMNRRPSMPAAPQEIPMYHLASRG</sequence>
<dbReference type="EMBL" id="U24073">
    <property type="protein sequence ID" value="AAB39502.1"/>
    <property type="molecule type" value="Genomic_RNA"/>
</dbReference>
<dbReference type="EMBL" id="AB103462">
    <property type="protein sequence ID" value="BAC81968.1"/>
    <property type="molecule type" value="Genomic_RNA"/>
</dbReference>
<dbReference type="EMBL" id="AF104985">
    <property type="protein sequence ID" value="AAQ73460.1"/>
    <property type="molecule type" value="Genomic_RNA"/>
</dbReference>
<dbReference type="KEGG" id="vg:2559534"/>
<dbReference type="Proteomes" id="UP000008118">
    <property type="component" value="Segment"/>
</dbReference>
<dbReference type="GO" id="GO:0016020">
    <property type="term" value="C:membrane"/>
    <property type="evidence" value="ECO:0007669"/>
    <property type="project" value="UniProtKB-KW"/>
</dbReference>
<dbReference type="GO" id="GO:0019031">
    <property type="term" value="C:viral envelope"/>
    <property type="evidence" value="ECO:0007669"/>
    <property type="project" value="UniProtKB-KW"/>
</dbReference>
<dbReference type="GO" id="GO:0055036">
    <property type="term" value="C:virion membrane"/>
    <property type="evidence" value="ECO:0007669"/>
    <property type="project" value="UniProtKB-SubCell"/>
</dbReference>
<dbReference type="GO" id="GO:0046718">
    <property type="term" value="P:symbiont entry into host cell"/>
    <property type="evidence" value="ECO:0007669"/>
    <property type="project" value="UniProtKB-KW"/>
</dbReference>
<dbReference type="GO" id="GO:0019062">
    <property type="term" value="P:virion attachment to host cell"/>
    <property type="evidence" value="ECO:0007669"/>
    <property type="project" value="UniProtKB-KW"/>
</dbReference>
<dbReference type="InterPro" id="IPR055447">
    <property type="entry name" value="Rhabdo_glycop_CD"/>
</dbReference>
<dbReference type="InterPro" id="IPR001903">
    <property type="entry name" value="Rhabdo_glycop_FD"/>
</dbReference>
<dbReference type="InterPro" id="IPR002417">
    <property type="entry name" value="Spike_prot"/>
</dbReference>
<dbReference type="Pfam" id="PF24833">
    <property type="entry name" value="Rhabdo_glycop_CD"/>
    <property type="match status" value="1"/>
</dbReference>
<dbReference type="Pfam" id="PF00974">
    <property type="entry name" value="Rhabdo_glycop_FD"/>
    <property type="match status" value="1"/>
</dbReference>
<dbReference type="PRINTS" id="PR00796">
    <property type="entry name" value="SPIKEPROTEIN"/>
</dbReference>
<dbReference type="SUPFAM" id="SSF161008">
    <property type="entry name" value="Viral glycoprotein ectodomain-like"/>
    <property type="match status" value="1"/>
</dbReference>
<evidence type="ECO:0000250" key="1"/>
<evidence type="ECO:0000255" key="2"/>
<evidence type="ECO:0000305" key="3"/>
<protein>
    <recommendedName>
        <fullName>Glycoprotein</fullName>
    </recommendedName>
</protein>
<organism>
    <name type="scientific">Hirame rhabdovirus (strain Korea/CA 9703/1997)</name>
    <name type="common">HIRRV</name>
    <dbReference type="NCBI Taxonomy" id="453457"/>
    <lineage>
        <taxon>Viruses</taxon>
        <taxon>Riboviria</taxon>
        <taxon>Orthornavirae</taxon>
        <taxon>Negarnaviricota</taxon>
        <taxon>Haploviricotina</taxon>
        <taxon>Monjiviricetes</taxon>
        <taxon>Mononegavirales</taxon>
        <taxon>Rhabdoviridae</taxon>
        <taxon>Gammarhabdovirinae</taxon>
        <taxon>Novirhabdovirus</taxon>
        <taxon>Novirhabdovirus hirame</taxon>
    </lineage>
</organism>
<feature type="signal peptide" evidence="2">
    <location>
        <begin position="1"/>
        <end position="20"/>
    </location>
</feature>
<feature type="chain" id="PRO_0000299233" description="Glycoprotein">
    <location>
        <begin position="21"/>
        <end position="508"/>
    </location>
</feature>
<feature type="topological domain" description="Virion surface" evidence="2">
    <location>
        <begin position="21"/>
        <end position="461"/>
    </location>
</feature>
<feature type="transmembrane region" description="Helical" evidence="2">
    <location>
        <begin position="462"/>
        <end position="482"/>
    </location>
</feature>
<feature type="topological domain" description="Intravirion" evidence="2">
    <location>
        <begin position="483"/>
        <end position="508"/>
    </location>
</feature>
<feature type="sequence variant" description="In strain: Isolate 8401H and Isolate 8601H.">
    <original>R</original>
    <variation>Q</variation>
    <location>
        <position position="71"/>
    </location>
</feature>
<feature type="sequence variant" description="In strain: Isolate 8601H.">
    <original>S</original>
    <variation>P</variation>
    <location>
        <position position="217"/>
    </location>
</feature>
<feature type="sequence variant" description="In strain: Isolate 8401H and Isolate 8601H.">
    <original>L</original>
    <variation>P</variation>
    <location>
        <position position="245"/>
    </location>
</feature>
<gene>
    <name type="primary">G</name>
</gene>
<comment type="function">
    <text evidence="1">Attaches the virus to host cellular receptor, inducing endocytosis of the virion. In the endosome, the acidic pH induces conformational changes in the glycoprotein trimer, which trigger fusion between virus and cell membrane (By similarity).</text>
</comment>
<comment type="subunit">
    <text evidence="1">Homotrimer. Interacts with matrix protein (By similarity).</text>
</comment>
<comment type="subcellular location">
    <subcellularLocation>
        <location evidence="1">Virion membrane</location>
        <topology evidence="1">Single-pass type I membrane protein</topology>
    </subcellularLocation>
</comment>
<comment type="PTM">
    <text evidence="1">Glycosylated by host. Glycosylation is crucial for glycoprotein export at the cell surface (By similarity).</text>
</comment>
<comment type="similarity">
    <text evidence="3">Belongs to the novirhabdovirus glycoprotein family.</text>
</comment>
<proteinExistence type="inferred from homology"/>
<keyword id="KW-0325">Glycoprotein</keyword>
<keyword id="KW-0945">Host-virus interaction</keyword>
<keyword id="KW-0472">Membrane</keyword>
<keyword id="KW-0732">Signal</keyword>
<keyword id="KW-0812">Transmembrane</keyword>
<keyword id="KW-1133">Transmembrane helix</keyword>
<keyword id="KW-1161">Viral attachment to host cell</keyword>
<keyword id="KW-0261">Viral envelope protein</keyword>
<keyword id="KW-0946">Virion</keyword>
<keyword id="KW-1160">Virus entry into host cell</keyword>
<accession>Q77SK0</accession>
<accession>Q76G52</accession>
<accession>Q82020</accession>